<accession>P25011</accession>
<organism>
    <name type="scientific">Glycine max</name>
    <name type="common">Soybean</name>
    <name type="synonym">Glycine hispida</name>
    <dbReference type="NCBI Taxonomy" id="3847"/>
    <lineage>
        <taxon>Eukaryota</taxon>
        <taxon>Viridiplantae</taxon>
        <taxon>Streptophyta</taxon>
        <taxon>Embryophyta</taxon>
        <taxon>Tracheophyta</taxon>
        <taxon>Spermatophyta</taxon>
        <taxon>Magnoliopsida</taxon>
        <taxon>eudicotyledons</taxon>
        <taxon>Gunneridae</taxon>
        <taxon>Pentapetalae</taxon>
        <taxon>rosids</taxon>
        <taxon>fabids</taxon>
        <taxon>Fabales</taxon>
        <taxon>Fabaceae</taxon>
        <taxon>Papilionoideae</taxon>
        <taxon>50 kb inversion clade</taxon>
        <taxon>NPAAA clade</taxon>
        <taxon>indigoferoid/millettioid clade</taxon>
        <taxon>Phaseoleae</taxon>
        <taxon>Glycine</taxon>
        <taxon>Glycine subgen. Soja</taxon>
    </lineage>
</organism>
<comment type="function">
    <text>Essential for the control of the cell cycle at the G2/M (mitosis) transition.</text>
</comment>
<comment type="subunit">
    <text>Interacts with the CDC2 protein kinase to form a serine/threonine kinase holoenzyme complex also known as maturation promoting factor (MPF). The cyclin subunit imparts substrate specificity to the complex.</text>
</comment>
<comment type="developmental stage">
    <text>Accumulates steadily during G2 and is abruptly destroyed at mitosis.</text>
</comment>
<comment type="similarity">
    <text evidence="2">Belongs to the cyclin family. Cyclin AB subfamily.</text>
</comment>
<name>CCNB1_SOYBN</name>
<dbReference type="EMBL" id="X62820">
    <property type="protein sequence ID" value="CAA44632.1"/>
    <property type="molecule type" value="mRNA"/>
</dbReference>
<dbReference type="PIR" id="S16522">
    <property type="entry name" value="S16522"/>
</dbReference>
<dbReference type="RefSeq" id="NP_001236113.1">
    <property type="nucleotide sequence ID" value="NM_001249184.2"/>
</dbReference>
<dbReference type="SMR" id="P25011"/>
<dbReference type="FunCoup" id="P25011">
    <property type="interactions" value="2558"/>
</dbReference>
<dbReference type="STRING" id="3847.P25011"/>
<dbReference type="PaxDb" id="3847-GLYMA03G27910.1"/>
<dbReference type="GeneID" id="547920"/>
<dbReference type="KEGG" id="gmx:547920"/>
<dbReference type="eggNOG" id="KOG0653">
    <property type="taxonomic scope" value="Eukaryota"/>
</dbReference>
<dbReference type="InParanoid" id="P25011"/>
<dbReference type="Proteomes" id="UP000008827">
    <property type="component" value="Unplaced"/>
</dbReference>
<dbReference type="GO" id="GO:0000307">
    <property type="term" value="C:cyclin-dependent protein kinase holoenzyme complex"/>
    <property type="evidence" value="ECO:0000318"/>
    <property type="project" value="GO_Central"/>
</dbReference>
<dbReference type="GO" id="GO:0005737">
    <property type="term" value="C:cytoplasm"/>
    <property type="evidence" value="ECO:0000318"/>
    <property type="project" value="GO_Central"/>
</dbReference>
<dbReference type="GO" id="GO:0005634">
    <property type="term" value="C:nucleus"/>
    <property type="evidence" value="ECO:0000318"/>
    <property type="project" value="GO_Central"/>
</dbReference>
<dbReference type="GO" id="GO:0016538">
    <property type="term" value="F:cyclin-dependent protein serine/threonine kinase regulator activity"/>
    <property type="evidence" value="ECO:0000318"/>
    <property type="project" value="GO_Central"/>
</dbReference>
<dbReference type="GO" id="GO:0051301">
    <property type="term" value="P:cell division"/>
    <property type="evidence" value="ECO:0007669"/>
    <property type="project" value="UniProtKB-KW"/>
</dbReference>
<dbReference type="GO" id="GO:0000082">
    <property type="term" value="P:G1/S transition of mitotic cell cycle"/>
    <property type="evidence" value="ECO:0000318"/>
    <property type="project" value="GO_Central"/>
</dbReference>
<dbReference type="CDD" id="cd20567">
    <property type="entry name" value="CYCLIN_AtCycB-like_rpt1"/>
    <property type="match status" value="1"/>
</dbReference>
<dbReference type="CDD" id="cd20511">
    <property type="entry name" value="CYCLIN_AtCycB-like_rpt2"/>
    <property type="match status" value="1"/>
</dbReference>
<dbReference type="FunFam" id="1.10.472.10:FF:000032">
    <property type="entry name" value="G2/mitotic-specific cyclin-1"/>
    <property type="match status" value="1"/>
</dbReference>
<dbReference type="Gene3D" id="1.10.472.10">
    <property type="entry name" value="Cyclin-like"/>
    <property type="match status" value="2"/>
</dbReference>
<dbReference type="InterPro" id="IPR039361">
    <property type="entry name" value="Cyclin"/>
</dbReference>
<dbReference type="InterPro" id="IPR013763">
    <property type="entry name" value="Cyclin-like_dom"/>
</dbReference>
<dbReference type="InterPro" id="IPR036915">
    <property type="entry name" value="Cyclin-like_sf"/>
</dbReference>
<dbReference type="InterPro" id="IPR046965">
    <property type="entry name" value="Cyclin_A/B-like"/>
</dbReference>
<dbReference type="InterPro" id="IPR004367">
    <property type="entry name" value="Cyclin_C-dom"/>
</dbReference>
<dbReference type="InterPro" id="IPR006671">
    <property type="entry name" value="Cyclin_N"/>
</dbReference>
<dbReference type="InterPro" id="IPR048258">
    <property type="entry name" value="Cyclins_cyclin-box"/>
</dbReference>
<dbReference type="PANTHER" id="PTHR10177">
    <property type="entry name" value="CYCLINS"/>
    <property type="match status" value="1"/>
</dbReference>
<dbReference type="Pfam" id="PF02984">
    <property type="entry name" value="Cyclin_C"/>
    <property type="match status" value="1"/>
</dbReference>
<dbReference type="Pfam" id="PF00134">
    <property type="entry name" value="Cyclin_N"/>
    <property type="match status" value="1"/>
</dbReference>
<dbReference type="PIRSF" id="PIRSF001771">
    <property type="entry name" value="Cyclin_A_B_D_E"/>
    <property type="match status" value="1"/>
</dbReference>
<dbReference type="SMART" id="SM00385">
    <property type="entry name" value="CYCLIN"/>
    <property type="match status" value="2"/>
</dbReference>
<dbReference type="SMART" id="SM01332">
    <property type="entry name" value="Cyclin_C"/>
    <property type="match status" value="1"/>
</dbReference>
<dbReference type="SUPFAM" id="SSF47954">
    <property type="entry name" value="Cyclin-like"/>
    <property type="match status" value="2"/>
</dbReference>
<dbReference type="PROSITE" id="PS00292">
    <property type="entry name" value="CYCLINS"/>
    <property type="match status" value="1"/>
</dbReference>
<evidence type="ECO:0000256" key="1">
    <source>
        <dbReference type="SAM" id="MobiDB-lite"/>
    </source>
</evidence>
<evidence type="ECO:0000305" key="2"/>
<feature type="chain" id="PRO_0000080397" description="G2/mitotic-specific cyclin S13-6">
    <location>
        <begin position="1"/>
        <end position="454"/>
    </location>
</feature>
<feature type="region of interest" description="Disordered" evidence="1">
    <location>
        <begin position="1"/>
        <end position="35"/>
    </location>
</feature>
<feature type="region of interest" description="Disordered" evidence="1">
    <location>
        <begin position="108"/>
        <end position="155"/>
    </location>
</feature>
<feature type="compositionally biased region" description="Polar residues" evidence="1">
    <location>
        <begin position="1"/>
        <end position="11"/>
    </location>
</feature>
<feature type="compositionally biased region" description="Basic and acidic residues" evidence="1">
    <location>
        <begin position="118"/>
        <end position="147"/>
    </location>
</feature>
<protein>
    <recommendedName>
        <fullName>G2/mitotic-specific cyclin S13-6</fullName>
    </recommendedName>
    <alternativeName>
        <fullName>B-like cyclin</fullName>
    </alternativeName>
</protein>
<keyword id="KW-0131">Cell cycle</keyword>
<keyword id="KW-0132">Cell division</keyword>
<keyword id="KW-0195">Cyclin</keyword>
<keyword id="KW-0498">Mitosis</keyword>
<keyword id="KW-1185">Reference proteome</keyword>
<sequence length="454" mass="50095">MASRIVQQQQARGEAVVGGGKQQKKNGVADGRNRKALGDIGNLANVRGVVDAKPNRPITRSFGAQLLANAQAAAAADNSKRQACANVAGPPAVANEGVAVAKRAAPKPVSKKVIVKPKPSEKVTDIDASPDKKEVLKDKKKEGDANPKKKSQHTLTSVLTARSKAACGITNKPKEQIIDIDASDVDNELAAVEYIDDIYKFYKLVENESRPHDYIGSQPEINERMRAILVDWLIDVHTKFELSLETLYLTINIIDRFLAVKTVPRRELQLVGISAMLMASKYEEIWPPEVNDFVCLSDRAYTHEHILTMEKTILNKLEWTLTVPTPLVFLVRFIKASVPDQELDNMAHFLSELGMMNYATLMYCPSMVAASAVLAARCTLNKAPFWNETLKLHTGYSQEQLMDCARLLVGFYSTLENGKLRVVYRKYSDPQKGAVAVLPPAKFLLPEGSASQHS</sequence>
<proteinExistence type="evidence at transcript level"/>
<reference key="1">
    <citation type="journal article" date="1991" name="EMBO J.">
        <title>Isolation and characterization of cDNA clones for plant cyclins.</title>
        <authorList>
            <person name="Hata S."/>
            <person name="Kouchi H."/>
            <person name="Suzuka I."/>
            <person name="Ishii T."/>
        </authorList>
    </citation>
    <scope>NUCLEOTIDE SEQUENCE [MRNA]</scope>
    <source>
        <strain>cv. Akisengoku</strain>
        <tissue>Root</tissue>
    </source>
</reference>